<accession>Q65IW0</accession>
<accession>Q62UB8</accession>
<protein>
    <recommendedName>
        <fullName evidence="1">Mannonate dehydratase 2</fullName>
        <ecNumber evidence="1">4.2.1.8</ecNumber>
    </recommendedName>
    <alternativeName>
        <fullName evidence="1">D-mannonate hydro-lyase 2</fullName>
    </alternativeName>
</protein>
<name>UXUA2_BACLD</name>
<reference key="1">
    <citation type="journal article" date="2004" name="J. Mol. Microbiol. Biotechnol.">
        <title>The complete genome sequence of Bacillus licheniformis DSM13, an organism with great industrial potential.</title>
        <authorList>
            <person name="Veith B."/>
            <person name="Herzberg C."/>
            <person name="Steckel S."/>
            <person name="Feesche J."/>
            <person name="Maurer K.H."/>
            <person name="Ehrenreich P."/>
            <person name="Baeumer S."/>
            <person name="Henne A."/>
            <person name="Liesegang H."/>
            <person name="Merkl R."/>
            <person name="Ehrenreich A."/>
            <person name="Gottschalk G."/>
        </authorList>
    </citation>
    <scope>NUCLEOTIDE SEQUENCE [LARGE SCALE GENOMIC DNA]</scope>
    <source>
        <strain>ATCC 14580 / DSM 13 / JCM 2505 / CCUG 7422 / NBRC 12200 / NCIMB 9375 / NCTC 10341 / NRRL NRS-1264 / Gibson 46</strain>
    </source>
</reference>
<reference key="2">
    <citation type="journal article" date="2004" name="Genome Biol.">
        <title>Complete genome sequence of the industrial bacterium Bacillus licheniformis and comparisons with closely related Bacillus species.</title>
        <authorList>
            <person name="Rey M.W."/>
            <person name="Ramaiya P."/>
            <person name="Nelson B.A."/>
            <person name="Brody-Karpin S.D."/>
            <person name="Zaretsky E.J."/>
            <person name="Tang M."/>
            <person name="Lopez de Leon A."/>
            <person name="Xiang H."/>
            <person name="Gusti V."/>
            <person name="Clausen I.G."/>
            <person name="Olsen P.B."/>
            <person name="Rasmussen M.D."/>
            <person name="Andersen J.T."/>
            <person name="Joergensen P.L."/>
            <person name="Larsen T.S."/>
            <person name="Sorokin A."/>
            <person name="Bolotin A."/>
            <person name="Lapidus A."/>
            <person name="Galleron N."/>
            <person name="Ehrlich S.D."/>
            <person name="Berka R.M."/>
        </authorList>
    </citation>
    <scope>NUCLEOTIDE SEQUENCE [LARGE SCALE GENOMIC DNA]</scope>
    <source>
        <strain>ATCC 14580 / DSM 13 / JCM 2505 / CCUG 7422 / NBRC 12200 / NCIMB 9375 / NCTC 10341 / NRRL NRS-1264 / Gibson 46</strain>
    </source>
</reference>
<comment type="function">
    <text evidence="1">Catalyzes the dehydration of D-mannonate.</text>
</comment>
<comment type="catalytic activity">
    <reaction evidence="1">
        <text>D-mannonate = 2-dehydro-3-deoxy-D-gluconate + H2O</text>
        <dbReference type="Rhea" id="RHEA:20097"/>
        <dbReference type="ChEBI" id="CHEBI:15377"/>
        <dbReference type="ChEBI" id="CHEBI:17767"/>
        <dbReference type="ChEBI" id="CHEBI:57990"/>
        <dbReference type="EC" id="4.2.1.8"/>
    </reaction>
</comment>
<comment type="cofactor">
    <cofactor evidence="1">
        <name>Fe(2+)</name>
        <dbReference type="ChEBI" id="CHEBI:29033"/>
    </cofactor>
    <cofactor evidence="1">
        <name>Mn(2+)</name>
        <dbReference type="ChEBI" id="CHEBI:29035"/>
    </cofactor>
</comment>
<comment type="pathway">
    <text evidence="1">Carbohydrate metabolism; pentose and glucuronate interconversion.</text>
</comment>
<comment type="similarity">
    <text evidence="1">Belongs to the mannonate dehydratase family.</text>
</comment>
<sequence>MQMTFRWYGDSDPVTLEYIRQIPGVTGIVSAIYDIPVGEAWPYEKIVELKEKIENHGLSLSVIESVPVHEDIKLGLPTRDQYIENYKTTIRNLAKAGVKIVCYNFMPVFDWTRSSLDYALEDGSTALIYEEEKVRQMNPLHGELKLPGWDTSYEDGQLKNLFQQYQHMTEEDLWENLSYFIKAVIPAAENEQVKMAIHPDDPPWPIFGLPRIITNKENLERLIHLYDSSFNGLCLCSGSLGVKSTNDIPELIRYFGKKGKVNFVHLRNIKIIGEKSFQESSHRSEDGSLDMYEIVRALRDIDFAGPARPDHGRMIWGETGKPGYGLYDRALGAVYLNGMWETLTKEKKRIALECNK</sequence>
<gene>
    <name evidence="1" type="primary">uxuA2</name>
    <name type="ordered locus">BLi02116</name>
    <name type="ordered locus">BL00281</name>
</gene>
<feature type="chain" id="PRO_0000231048" description="Mannonate dehydratase 2">
    <location>
        <begin position="1"/>
        <end position="356"/>
    </location>
</feature>
<dbReference type="EC" id="4.2.1.8" evidence="1"/>
<dbReference type="EMBL" id="AE017333">
    <property type="protein sequence ID" value="AAU41004.1"/>
    <property type="molecule type" value="Genomic_DNA"/>
</dbReference>
<dbReference type="EMBL" id="CP000002">
    <property type="protein sequence ID" value="AAU23641.2"/>
    <property type="molecule type" value="Genomic_DNA"/>
</dbReference>
<dbReference type="SMR" id="Q65IW0"/>
<dbReference type="STRING" id="279010.BL00281"/>
<dbReference type="KEGG" id="bld:BLi02116"/>
<dbReference type="KEGG" id="bli:BL00281"/>
<dbReference type="eggNOG" id="COG1312">
    <property type="taxonomic scope" value="Bacteria"/>
</dbReference>
<dbReference type="HOGENOM" id="CLU_058621_1_0_9"/>
<dbReference type="UniPathway" id="UPA00246"/>
<dbReference type="Proteomes" id="UP000000606">
    <property type="component" value="Chromosome"/>
</dbReference>
<dbReference type="GO" id="GO:0008198">
    <property type="term" value="F:ferrous iron binding"/>
    <property type="evidence" value="ECO:0007669"/>
    <property type="project" value="TreeGrafter"/>
</dbReference>
<dbReference type="GO" id="GO:0030145">
    <property type="term" value="F:manganese ion binding"/>
    <property type="evidence" value="ECO:0007669"/>
    <property type="project" value="TreeGrafter"/>
</dbReference>
<dbReference type="GO" id="GO:0008927">
    <property type="term" value="F:mannonate dehydratase activity"/>
    <property type="evidence" value="ECO:0007669"/>
    <property type="project" value="UniProtKB-UniRule"/>
</dbReference>
<dbReference type="GO" id="GO:0042840">
    <property type="term" value="P:D-glucuronate catabolic process"/>
    <property type="evidence" value="ECO:0007669"/>
    <property type="project" value="TreeGrafter"/>
</dbReference>
<dbReference type="Gene3D" id="3.20.20.150">
    <property type="entry name" value="Divalent-metal-dependent TIM barrel enzymes"/>
    <property type="match status" value="1"/>
</dbReference>
<dbReference type="HAMAP" id="MF_00106">
    <property type="entry name" value="UxuA"/>
    <property type="match status" value="1"/>
</dbReference>
<dbReference type="InterPro" id="IPR004628">
    <property type="entry name" value="Man_deHydtase"/>
</dbReference>
<dbReference type="InterPro" id="IPR036237">
    <property type="entry name" value="Xyl_isomerase-like_sf"/>
</dbReference>
<dbReference type="NCBIfam" id="NF003027">
    <property type="entry name" value="PRK03906.1"/>
    <property type="match status" value="2"/>
</dbReference>
<dbReference type="NCBIfam" id="TIGR00695">
    <property type="entry name" value="uxuA"/>
    <property type="match status" value="2"/>
</dbReference>
<dbReference type="PANTHER" id="PTHR30387">
    <property type="entry name" value="MANNONATE DEHYDRATASE"/>
    <property type="match status" value="1"/>
</dbReference>
<dbReference type="PANTHER" id="PTHR30387:SF2">
    <property type="entry name" value="MANNONATE DEHYDRATASE"/>
    <property type="match status" value="1"/>
</dbReference>
<dbReference type="Pfam" id="PF03786">
    <property type="entry name" value="UxuA"/>
    <property type="match status" value="1"/>
</dbReference>
<dbReference type="PIRSF" id="PIRSF016049">
    <property type="entry name" value="Man_dehyd"/>
    <property type="match status" value="1"/>
</dbReference>
<dbReference type="SUPFAM" id="SSF51658">
    <property type="entry name" value="Xylose isomerase-like"/>
    <property type="match status" value="1"/>
</dbReference>
<organism>
    <name type="scientific">Bacillus licheniformis (strain ATCC 14580 / DSM 13 / JCM 2505 / CCUG 7422 / NBRC 12200 / NCIMB 9375 / NCTC 10341 / NRRL NRS-1264 / Gibson 46)</name>
    <dbReference type="NCBI Taxonomy" id="279010"/>
    <lineage>
        <taxon>Bacteria</taxon>
        <taxon>Bacillati</taxon>
        <taxon>Bacillota</taxon>
        <taxon>Bacilli</taxon>
        <taxon>Bacillales</taxon>
        <taxon>Bacillaceae</taxon>
        <taxon>Bacillus</taxon>
    </lineage>
</organism>
<proteinExistence type="inferred from homology"/>
<keyword id="KW-0408">Iron</keyword>
<keyword id="KW-0456">Lyase</keyword>
<keyword id="KW-0464">Manganese</keyword>
<keyword id="KW-1185">Reference proteome</keyword>
<evidence type="ECO:0000255" key="1">
    <source>
        <dbReference type="HAMAP-Rule" id="MF_00106"/>
    </source>
</evidence>